<name>LDH_STRA1</name>
<feature type="chain" id="PRO_0000237563" description="L-lactate dehydrogenase">
    <location>
        <begin position="1"/>
        <end position="329"/>
    </location>
</feature>
<feature type="active site" description="Proton acceptor" evidence="1">
    <location>
        <position position="181"/>
    </location>
</feature>
<feature type="binding site" evidence="1">
    <location>
        <position position="18"/>
    </location>
    <ligand>
        <name>NAD(+)</name>
        <dbReference type="ChEBI" id="CHEBI:57540"/>
    </ligand>
</feature>
<feature type="binding site" evidence="1">
    <location>
        <position position="39"/>
    </location>
    <ligand>
        <name>NAD(+)</name>
        <dbReference type="ChEBI" id="CHEBI:57540"/>
    </ligand>
</feature>
<feature type="binding site" evidence="1">
    <location>
        <position position="46"/>
    </location>
    <ligand>
        <name>NAD(+)</name>
        <dbReference type="ChEBI" id="CHEBI:57540"/>
    </ligand>
</feature>
<feature type="binding site" evidence="1">
    <location>
        <position position="71"/>
    </location>
    <ligand>
        <name>NAD(+)</name>
        <dbReference type="ChEBI" id="CHEBI:57540"/>
    </ligand>
</feature>
<feature type="binding site" evidence="1">
    <location>
        <begin position="85"/>
        <end position="86"/>
    </location>
    <ligand>
        <name>NAD(+)</name>
        <dbReference type="ChEBI" id="CHEBI:57540"/>
    </ligand>
</feature>
<feature type="binding site" evidence="1">
    <location>
        <position position="88"/>
    </location>
    <ligand>
        <name>substrate</name>
    </ligand>
</feature>
<feature type="binding site" evidence="1">
    <location>
        <position position="94"/>
    </location>
    <ligand>
        <name>substrate</name>
    </ligand>
</feature>
<feature type="binding site" evidence="1">
    <location>
        <position position="107"/>
    </location>
    <ligand>
        <name>NAD(+)</name>
        <dbReference type="ChEBI" id="CHEBI:57540"/>
    </ligand>
</feature>
<feature type="binding site" evidence="1">
    <location>
        <begin position="124"/>
        <end position="126"/>
    </location>
    <ligand>
        <name>NAD(+)</name>
        <dbReference type="ChEBI" id="CHEBI:57540"/>
    </ligand>
</feature>
<feature type="binding site" evidence="1">
    <location>
        <begin position="126"/>
        <end position="129"/>
    </location>
    <ligand>
        <name>substrate</name>
    </ligand>
</feature>
<feature type="binding site" evidence="1">
    <location>
        <position position="149"/>
    </location>
    <ligand>
        <name>NAD(+)</name>
        <dbReference type="ChEBI" id="CHEBI:57540"/>
    </ligand>
</feature>
<feature type="binding site" evidence="1">
    <location>
        <begin position="154"/>
        <end position="157"/>
    </location>
    <ligand>
        <name>substrate</name>
    </ligand>
</feature>
<feature type="binding site" evidence="1">
    <location>
        <position position="159"/>
    </location>
    <ligand>
        <name>beta-D-fructose 1,6-bisphosphate</name>
        <dbReference type="ChEBI" id="CHEBI:32966"/>
        <note>allosteric activator</note>
    </ligand>
</feature>
<feature type="binding site" evidence="1">
    <location>
        <position position="174"/>
    </location>
    <ligand>
        <name>beta-D-fructose 1,6-bisphosphate</name>
        <dbReference type="ChEBI" id="CHEBI:32966"/>
        <note>allosteric activator</note>
    </ligand>
</feature>
<feature type="binding site" evidence="1">
    <location>
        <position position="235"/>
    </location>
    <ligand>
        <name>substrate</name>
    </ligand>
</feature>
<feature type="modified residue" description="Phosphotyrosine" evidence="1">
    <location>
        <position position="226"/>
    </location>
</feature>
<keyword id="KW-0021">Allosteric enzyme</keyword>
<keyword id="KW-0963">Cytoplasm</keyword>
<keyword id="KW-0520">NAD</keyword>
<keyword id="KW-0560">Oxidoreductase</keyword>
<keyword id="KW-0597">Phosphoprotein</keyword>
<reference key="1">
    <citation type="journal article" date="2005" name="Proc. Natl. Acad. Sci. U.S.A.">
        <title>Genome analysis of multiple pathogenic isolates of Streptococcus agalactiae: implications for the microbial 'pan-genome'.</title>
        <authorList>
            <person name="Tettelin H."/>
            <person name="Masignani V."/>
            <person name="Cieslewicz M.J."/>
            <person name="Donati C."/>
            <person name="Medini D."/>
            <person name="Ward N.L."/>
            <person name="Angiuoli S.V."/>
            <person name="Crabtree J."/>
            <person name="Jones A.L."/>
            <person name="Durkin A.S."/>
            <person name="DeBoy R.T."/>
            <person name="Davidsen T.M."/>
            <person name="Mora M."/>
            <person name="Scarselli M."/>
            <person name="Margarit y Ros I."/>
            <person name="Peterson J.D."/>
            <person name="Hauser C.R."/>
            <person name="Sundaram J.P."/>
            <person name="Nelson W.C."/>
            <person name="Madupu R."/>
            <person name="Brinkac L.M."/>
            <person name="Dodson R.J."/>
            <person name="Rosovitz M.J."/>
            <person name="Sullivan S.A."/>
            <person name="Daugherty S.C."/>
            <person name="Haft D.H."/>
            <person name="Selengut J."/>
            <person name="Gwinn M.L."/>
            <person name="Zhou L."/>
            <person name="Zafar N."/>
            <person name="Khouri H."/>
            <person name="Radune D."/>
            <person name="Dimitrov G."/>
            <person name="Watkins K."/>
            <person name="O'Connor K.J."/>
            <person name="Smith S."/>
            <person name="Utterback T.R."/>
            <person name="White O."/>
            <person name="Rubens C.E."/>
            <person name="Grandi G."/>
            <person name="Madoff L.C."/>
            <person name="Kasper D.L."/>
            <person name="Telford J.L."/>
            <person name="Wessels M.R."/>
            <person name="Rappuoli R."/>
            <person name="Fraser C.M."/>
        </authorList>
    </citation>
    <scope>NUCLEOTIDE SEQUENCE [LARGE SCALE GENOMIC DNA]</scope>
    <source>
        <strain>ATCC 27591 / A909 / CDC SS700</strain>
    </source>
</reference>
<sequence>MTATKQHKKVILVGDGAVGSSYAFALVNQGIAQELGIIEIPALFDKAVGDAEDLSHALAFTSPKKIYAATYADCADADLVVITAGAPQKPGETRLDLVGKNLAINKSIVTQVVESGFNGIFLVAANPVDVLTYSTWKFSGFPKERVIGSGTSLDSARFRQALADKIGVDARSVHAYIMGEHGDSEFAVWSHANVAGVQLEQWLQENRDIDEQGLVDLFISVRDAAYSIINKKGATYYGIAVALARITKAILDDENAVLPLSVYQEGQYGDVKDVFIGQPAIVGAHGIVRPVNIPLNDAELQKMQASAEQLKDIIDEAWKNPEFQEASKN</sequence>
<comment type="function">
    <text evidence="1">Catalyzes the conversion of lactate to pyruvate.</text>
</comment>
<comment type="catalytic activity">
    <reaction evidence="1">
        <text>(S)-lactate + NAD(+) = pyruvate + NADH + H(+)</text>
        <dbReference type="Rhea" id="RHEA:23444"/>
        <dbReference type="ChEBI" id="CHEBI:15361"/>
        <dbReference type="ChEBI" id="CHEBI:15378"/>
        <dbReference type="ChEBI" id="CHEBI:16651"/>
        <dbReference type="ChEBI" id="CHEBI:57540"/>
        <dbReference type="ChEBI" id="CHEBI:57945"/>
        <dbReference type="EC" id="1.1.1.27"/>
    </reaction>
</comment>
<comment type="activity regulation">
    <text evidence="1">Allosterically activated by fructose 1,6-bisphosphate (FBP).</text>
</comment>
<comment type="pathway">
    <text evidence="1">Fermentation; pyruvate fermentation to lactate; (S)-lactate from pyruvate: step 1/1.</text>
</comment>
<comment type="subunit">
    <text evidence="1">Homotetramer.</text>
</comment>
<comment type="subcellular location">
    <subcellularLocation>
        <location evidence="1">Cytoplasm</location>
    </subcellularLocation>
</comment>
<comment type="similarity">
    <text evidence="1">Belongs to the LDH/MDH superfamily. LDH family.</text>
</comment>
<protein>
    <recommendedName>
        <fullName evidence="1">L-lactate dehydrogenase</fullName>
        <shortName evidence="1">L-LDH</shortName>
        <ecNumber evidence="1">1.1.1.27</ecNumber>
    </recommendedName>
</protein>
<dbReference type="EC" id="1.1.1.27" evidence="1"/>
<dbReference type="EMBL" id="CP000114">
    <property type="protein sequence ID" value="ABA44511.1"/>
    <property type="molecule type" value="Genomic_DNA"/>
</dbReference>
<dbReference type="RefSeq" id="WP_000127487.1">
    <property type="nucleotide sequence ID" value="NC_007432.1"/>
</dbReference>
<dbReference type="SMR" id="Q3K1C8"/>
<dbReference type="KEGG" id="sak:SAK_1054"/>
<dbReference type="HOGENOM" id="CLU_045401_1_1_9"/>
<dbReference type="UniPathway" id="UPA00554">
    <property type="reaction ID" value="UER00611"/>
</dbReference>
<dbReference type="GO" id="GO:0005737">
    <property type="term" value="C:cytoplasm"/>
    <property type="evidence" value="ECO:0007669"/>
    <property type="project" value="UniProtKB-SubCell"/>
</dbReference>
<dbReference type="GO" id="GO:0004459">
    <property type="term" value="F:L-lactate dehydrogenase activity"/>
    <property type="evidence" value="ECO:0007669"/>
    <property type="project" value="UniProtKB-UniRule"/>
</dbReference>
<dbReference type="GO" id="GO:0006096">
    <property type="term" value="P:glycolytic process"/>
    <property type="evidence" value="ECO:0007669"/>
    <property type="project" value="UniProtKB-UniRule"/>
</dbReference>
<dbReference type="GO" id="GO:0006089">
    <property type="term" value="P:lactate metabolic process"/>
    <property type="evidence" value="ECO:0007669"/>
    <property type="project" value="TreeGrafter"/>
</dbReference>
<dbReference type="CDD" id="cd05291">
    <property type="entry name" value="HicDH_like"/>
    <property type="match status" value="1"/>
</dbReference>
<dbReference type="FunFam" id="3.40.50.720:FF:000018">
    <property type="entry name" value="Malate dehydrogenase"/>
    <property type="match status" value="1"/>
</dbReference>
<dbReference type="Gene3D" id="3.90.110.10">
    <property type="entry name" value="Lactate dehydrogenase/glycoside hydrolase, family 4, C-terminal"/>
    <property type="match status" value="1"/>
</dbReference>
<dbReference type="Gene3D" id="3.40.50.720">
    <property type="entry name" value="NAD(P)-binding Rossmann-like Domain"/>
    <property type="match status" value="1"/>
</dbReference>
<dbReference type="HAMAP" id="MF_00488">
    <property type="entry name" value="Lactate_dehydrog"/>
    <property type="match status" value="1"/>
</dbReference>
<dbReference type="InterPro" id="IPR001557">
    <property type="entry name" value="L-lactate/malate_DH"/>
</dbReference>
<dbReference type="InterPro" id="IPR011304">
    <property type="entry name" value="L-lactate_DH"/>
</dbReference>
<dbReference type="InterPro" id="IPR018177">
    <property type="entry name" value="L-lactate_DH_AS"/>
</dbReference>
<dbReference type="InterPro" id="IPR022383">
    <property type="entry name" value="Lactate/malate_DH_C"/>
</dbReference>
<dbReference type="InterPro" id="IPR001236">
    <property type="entry name" value="Lactate/malate_DH_N"/>
</dbReference>
<dbReference type="InterPro" id="IPR015955">
    <property type="entry name" value="Lactate_DH/Glyco_Ohase_4_C"/>
</dbReference>
<dbReference type="InterPro" id="IPR036291">
    <property type="entry name" value="NAD(P)-bd_dom_sf"/>
</dbReference>
<dbReference type="NCBIfam" id="TIGR01771">
    <property type="entry name" value="L-LDH-NAD"/>
    <property type="match status" value="1"/>
</dbReference>
<dbReference type="NCBIfam" id="NF000824">
    <property type="entry name" value="PRK00066.1"/>
    <property type="match status" value="1"/>
</dbReference>
<dbReference type="PANTHER" id="PTHR43128">
    <property type="entry name" value="L-2-HYDROXYCARBOXYLATE DEHYDROGENASE (NAD(P)(+))"/>
    <property type="match status" value="1"/>
</dbReference>
<dbReference type="PANTHER" id="PTHR43128:SF16">
    <property type="entry name" value="L-LACTATE DEHYDROGENASE"/>
    <property type="match status" value="1"/>
</dbReference>
<dbReference type="Pfam" id="PF02866">
    <property type="entry name" value="Ldh_1_C"/>
    <property type="match status" value="1"/>
</dbReference>
<dbReference type="Pfam" id="PF00056">
    <property type="entry name" value="Ldh_1_N"/>
    <property type="match status" value="1"/>
</dbReference>
<dbReference type="PIRSF" id="PIRSF000102">
    <property type="entry name" value="Lac_mal_DH"/>
    <property type="match status" value="1"/>
</dbReference>
<dbReference type="PRINTS" id="PR00086">
    <property type="entry name" value="LLDHDRGNASE"/>
</dbReference>
<dbReference type="SUPFAM" id="SSF56327">
    <property type="entry name" value="LDH C-terminal domain-like"/>
    <property type="match status" value="1"/>
</dbReference>
<dbReference type="SUPFAM" id="SSF51735">
    <property type="entry name" value="NAD(P)-binding Rossmann-fold domains"/>
    <property type="match status" value="1"/>
</dbReference>
<dbReference type="PROSITE" id="PS00064">
    <property type="entry name" value="L_LDH"/>
    <property type="match status" value="1"/>
</dbReference>
<evidence type="ECO:0000255" key="1">
    <source>
        <dbReference type="HAMAP-Rule" id="MF_00488"/>
    </source>
</evidence>
<organism>
    <name type="scientific">Streptococcus agalactiae serotype Ia (strain ATCC 27591 / A909 / CDC SS700)</name>
    <dbReference type="NCBI Taxonomy" id="205921"/>
    <lineage>
        <taxon>Bacteria</taxon>
        <taxon>Bacillati</taxon>
        <taxon>Bacillota</taxon>
        <taxon>Bacilli</taxon>
        <taxon>Lactobacillales</taxon>
        <taxon>Streptococcaceae</taxon>
        <taxon>Streptococcus</taxon>
    </lineage>
</organism>
<proteinExistence type="inferred from homology"/>
<gene>
    <name evidence="1" type="primary">ldh</name>
    <name type="ordered locus">SAK_1054</name>
</gene>
<accession>Q3K1C8</accession>